<keyword id="KW-0378">Hydrolase</keyword>
<keyword id="KW-0460">Magnesium</keyword>
<keyword id="KW-0479">Metal-binding</keyword>
<keyword id="KW-0546">Nucleotide metabolism</keyword>
<keyword id="KW-1185">Reference proteome</keyword>
<proteinExistence type="inferred from homology"/>
<organism>
    <name type="scientific">Chlamydia trachomatis serovar D (strain ATCC VR-885 / DSM 19411 / UW-3/Cx)</name>
    <dbReference type="NCBI Taxonomy" id="272561"/>
    <lineage>
        <taxon>Bacteria</taxon>
        <taxon>Pseudomonadati</taxon>
        <taxon>Chlamydiota</taxon>
        <taxon>Chlamydiia</taxon>
        <taxon>Chlamydiales</taxon>
        <taxon>Chlamydiaceae</taxon>
        <taxon>Chlamydia/Chlamydophila group</taxon>
        <taxon>Chlamydia</taxon>
    </lineage>
</organism>
<gene>
    <name evidence="1" type="primary">dut</name>
    <name type="ordered locus">CT_292</name>
</gene>
<accession>O84294</accession>
<evidence type="ECO:0000255" key="1">
    <source>
        <dbReference type="HAMAP-Rule" id="MF_00116"/>
    </source>
</evidence>
<dbReference type="EC" id="3.6.1.23" evidence="1"/>
<dbReference type="EMBL" id="AE001273">
    <property type="protein sequence ID" value="AAC67885.1"/>
    <property type="molecule type" value="Genomic_DNA"/>
</dbReference>
<dbReference type="PIR" id="A71534">
    <property type="entry name" value="A71534"/>
</dbReference>
<dbReference type="RefSeq" id="NP_219797.1">
    <property type="nucleotide sequence ID" value="NC_000117.1"/>
</dbReference>
<dbReference type="RefSeq" id="WP_009871640.1">
    <property type="nucleotide sequence ID" value="NC_000117.1"/>
</dbReference>
<dbReference type="SMR" id="O84294"/>
<dbReference type="FunCoup" id="O84294">
    <property type="interactions" value="167"/>
</dbReference>
<dbReference type="STRING" id="272561.CT_292"/>
<dbReference type="EnsemblBacteria" id="AAC67885">
    <property type="protein sequence ID" value="AAC67885"/>
    <property type="gene ID" value="CT_292"/>
</dbReference>
<dbReference type="GeneID" id="884833"/>
<dbReference type="KEGG" id="ctr:CT_292"/>
<dbReference type="PATRIC" id="fig|272561.5.peg.313"/>
<dbReference type="HOGENOM" id="CLU_068508_1_2_0"/>
<dbReference type="InParanoid" id="O84294"/>
<dbReference type="OrthoDB" id="9809956at2"/>
<dbReference type="UniPathway" id="UPA00610">
    <property type="reaction ID" value="UER00666"/>
</dbReference>
<dbReference type="Proteomes" id="UP000000431">
    <property type="component" value="Chromosome"/>
</dbReference>
<dbReference type="GO" id="GO:0004170">
    <property type="term" value="F:dUTP diphosphatase activity"/>
    <property type="evidence" value="ECO:0000318"/>
    <property type="project" value="GO_Central"/>
</dbReference>
<dbReference type="GO" id="GO:0000287">
    <property type="term" value="F:magnesium ion binding"/>
    <property type="evidence" value="ECO:0000318"/>
    <property type="project" value="GO_Central"/>
</dbReference>
<dbReference type="GO" id="GO:0006226">
    <property type="term" value="P:dUMP biosynthetic process"/>
    <property type="evidence" value="ECO:0000318"/>
    <property type="project" value="GO_Central"/>
</dbReference>
<dbReference type="GO" id="GO:0046081">
    <property type="term" value="P:dUTP catabolic process"/>
    <property type="evidence" value="ECO:0000318"/>
    <property type="project" value="GO_Central"/>
</dbReference>
<dbReference type="CDD" id="cd07557">
    <property type="entry name" value="trimeric_dUTPase"/>
    <property type="match status" value="1"/>
</dbReference>
<dbReference type="FunFam" id="2.70.40.10:FF:000008">
    <property type="entry name" value="Deoxyuridine 5'-triphosphate nucleotidohydrolase"/>
    <property type="match status" value="1"/>
</dbReference>
<dbReference type="Gene3D" id="2.70.40.10">
    <property type="match status" value="1"/>
</dbReference>
<dbReference type="HAMAP" id="MF_00116">
    <property type="entry name" value="dUTPase_bact"/>
    <property type="match status" value="1"/>
</dbReference>
<dbReference type="InterPro" id="IPR008181">
    <property type="entry name" value="dUTPase"/>
</dbReference>
<dbReference type="InterPro" id="IPR029054">
    <property type="entry name" value="dUTPase-like"/>
</dbReference>
<dbReference type="InterPro" id="IPR036157">
    <property type="entry name" value="dUTPase-like_sf"/>
</dbReference>
<dbReference type="InterPro" id="IPR033704">
    <property type="entry name" value="dUTPase_trimeric"/>
</dbReference>
<dbReference type="NCBIfam" id="TIGR00576">
    <property type="entry name" value="dut"/>
    <property type="match status" value="1"/>
</dbReference>
<dbReference type="NCBIfam" id="NF001862">
    <property type="entry name" value="PRK00601.1"/>
    <property type="match status" value="1"/>
</dbReference>
<dbReference type="PANTHER" id="PTHR11241">
    <property type="entry name" value="DEOXYURIDINE 5'-TRIPHOSPHATE NUCLEOTIDOHYDROLASE"/>
    <property type="match status" value="1"/>
</dbReference>
<dbReference type="PANTHER" id="PTHR11241:SF0">
    <property type="entry name" value="DEOXYURIDINE 5'-TRIPHOSPHATE NUCLEOTIDOHYDROLASE"/>
    <property type="match status" value="1"/>
</dbReference>
<dbReference type="Pfam" id="PF00692">
    <property type="entry name" value="dUTPase"/>
    <property type="match status" value="1"/>
</dbReference>
<dbReference type="SUPFAM" id="SSF51283">
    <property type="entry name" value="dUTPase-like"/>
    <property type="match status" value="1"/>
</dbReference>
<comment type="function">
    <text evidence="1">This enzyme is involved in nucleotide metabolism: it produces dUMP, the immediate precursor of thymidine nucleotides and it decreases the intracellular concentration of dUTP so that uracil cannot be incorporated into DNA.</text>
</comment>
<comment type="catalytic activity">
    <reaction evidence="1">
        <text>dUTP + H2O = dUMP + diphosphate + H(+)</text>
        <dbReference type="Rhea" id="RHEA:10248"/>
        <dbReference type="ChEBI" id="CHEBI:15377"/>
        <dbReference type="ChEBI" id="CHEBI:15378"/>
        <dbReference type="ChEBI" id="CHEBI:33019"/>
        <dbReference type="ChEBI" id="CHEBI:61555"/>
        <dbReference type="ChEBI" id="CHEBI:246422"/>
        <dbReference type="EC" id="3.6.1.23"/>
    </reaction>
</comment>
<comment type="cofactor">
    <cofactor evidence="1">
        <name>Mg(2+)</name>
        <dbReference type="ChEBI" id="CHEBI:18420"/>
    </cofactor>
</comment>
<comment type="pathway">
    <text evidence="1">Pyrimidine metabolism; dUMP biosynthesis; dUMP from dCTP (dUTP route): step 2/2.</text>
</comment>
<comment type="similarity">
    <text evidence="1">Belongs to the dUTPase family.</text>
</comment>
<protein>
    <recommendedName>
        <fullName evidence="1">Deoxyuridine 5'-triphosphate nucleotidohydrolase</fullName>
        <shortName evidence="1">dUTPase</shortName>
        <ecNumber evidence="1">3.6.1.23</ecNumber>
    </recommendedName>
    <alternativeName>
        <fullName evidence="1">dUTP pyrophosphatase</fullName>
    </alternativeName>
</protein>
<name>DUT_CHLTR</name>
<reference key="1">
    <citation type="journal article" date="1998" name="Science">
        <title>Genome sequence of an obligate intracellular pathogen of humans: Chlamydia trachomatis.</title>
        <authorList>
            <person name="Stephens R.S."/>
            <person name="Kalman S."/>
            <person name="Lammel C.J."/>
            <person name="Fan J."/>
            <person name="Marathe R."/>
            <person name="Aravind L."/>
            <person name="Mitchell W.P."/>
            <person name="Olinger L."/>
            <person name="Tatusov R.L."/>
            <person name="Zhao Q."/>
            <person name="Koonin E.V."/>
            <person name="Davis R.W."/>
        </authorList>
    </citation>
    <scope>NUCLEOTIDE SEQUENCE [LARGE SCALE GENOMIC DNA]</scope>
    <source>
        <strain>ATCC VR-885 / DSM 19411 / UW-3/Cx</strain>
    </source>
</reference>
<feature type="chain" id="PRO_0000182847" description="Deoxyuridine 5'-triphosphate nucleotidohydrolase">
    <location>
        <begin position="1"/>
        <end position="145"/>
    </location>
</feature>
<feature type="binding site" evidence="1">
    <location>
        <begin position="63"/>
        <end position="65"/>
    </location>
    <ligand>
        <name>substrate</name>
    </ligand>
</feature>
<feature type="binding site" evidence="1">
    <location>
        <position position="76"/>
    </location>
    <ligand>
        <name>substrate</name>
    </ligand>
</feature>
<feature type="binding site" evidence="1">
    <location>
        <begin position="80"/>
        <end position="82"/>
    </location>
    <ligand>
        <name>substrate</name>
    </ligand>
</feature>
<sequence length="145" mass="15337">MKFFCKLESGSSLPEYATSGASGADVRANINEPIAILPGQRALIPTGISVEIPHGYEIQVRSRSGLASKYGVIVLQSPGTVDADYRGEIRVILANLGEATFIVEPGMRIAQLVVAKVEQVSFVETQEELTATARGTGGFGHTGEC</sequence>